<proteinExistence type="inferred from homology"/>
<gene>
    <name evidence="2" type="primary">trmB</name>
    <name type="ordered locus">Meso_3925</name>
</gene>
<name>TRMB_CHESB</name>
<sequence length="232" mass="26790">MAERHPERSTEAFFGRRRGKRLRSQQTAAVEKLLPRLKLDLSSPAPAALDSLFGKPLREIRLEIGFGGGEHLLNEIRRHPDVGFIGVEPFVNGMAKLVAALEGEAPPNLRLYDDDATKLLDWLPDSAISRIDLFYPDPWPKKRHWKRRFVNKANLDRFARVLCVDGQFRFASDIEGYVNWTLLACRAHPDFRWVAKSAEDWRHPYEGWPGTRYEAKAMREGRHPAYLTFVRV</sequence>
<dbReference type="EC" id="2.1.1.33" evidence="2"/>
<dbReference type="EMBL" id="CP000390">
    <property type="protein sequence ID" value="ABG65292.1"/>
    <property type="molecule type" value="Genomic_DNA"/>
</dbReference>
<dbReference type="SMR" id="Q11BD3"/>
<dbReference type="STRING" id="266779.Meso_3925"/>
<dbReference type="KEGG" id="mes:Meso_3925"/>
<dbReference type="eggNOG" id="COG0220">
    <property type="taxonomic scope" value="Bacteria"/>
</dbReference>
<dbReference type="HOGENOM" id="CLU_050910_0_3_5"/>
<dbReference type="OrthoDB" id="9802090at2"/>
<dbReference type="UniPathway" id="UPA00989"/>
<dbReference type="GO" id="GO:0043527">
    <property type="term" value="C:tRNA methyltransferase complex"/>
    <property type="evidence" value="ECO:0007669"/>
    <property type="project" value="TreeGrafter"/>
</dbReference>
<dbReference type="GO" id="GO:0008176">
    <property type="term" value="F:tRNA (guanine(46)-N7)-methyltransferase activity"/>
    <property type="evidence" value="ECO:0007669"/>
    <property type="project" value="UniProtKB-UniRule"/>
</dbReference>
<dbReference type="Gene3D" id="3.40.50.150">
    <property type="entry name" value="Vaccinia Virus protein VP39"/>
    <property type="match status" value="1"/>
</dbReference>
<dbReference type="HAMAP" id="MF_01057">
    <property type="entry name" value="tRNA_methyltr_TrmB"/>
    <property type="match status" value="1"/>
</dbReference>
<dbReference type="InterPro" id="IPR029063">
    <property type="entry name" value="SAM-dependent_MTases_sf"/>
</dbReference>
<dbReference type="InterPro" id="IPR003358">
    <property type="entry name" value="tRNA_(Gua-N-7)_MeTrfase_Trmb"/>
</dbReference>
<dbReference type="InterPro" id="IPR055361">
    <property type="entry name" value="tRNA_methyltr_TrmB_bact"/>
</dbReference>
<dbReference type="PANTHER" id="PTHR23417">
    <property type="entry name" value="3-DEOXY-D-MANNO-OCTULOSONIC-ACID TRANSFERASE/TRNA GUANINE-N 7 - -METHYLTRANSFERASE"/>
    <property type="match status" value="1"/>
</dbReference>
<dbReference type="PANTHER" id="PTHR23417:SF14">
    <property type="entry name" value="PENTACOTRIPEPTIDE-REPEAT REGION OF PRORP DOMAIN-CONTAINING PROTEIN"/>
    <property type="match status" value="1"/>
</dbReference>
<dbReference type="Pfam" id="PF02390">
    <property type="entry name" value="Methyltransf_4"/>
    <property type="match status" value="1"/>
</dbReference>
<dbReference type="SUPFAM" id="SSF53335">
    <property type="entry name" value="S-adenosyl-L-methionine-dependent methyltransferases"/>
    <property type="match status" value="1"/>
</dbReference>
<dbReference type="PROSITE" id="PS51625">
    <property type="entry name" value="SAM_MT_TRMB"/>
    <property type="match status" value="1"/>
</dbReference>
<comment type="function">
    <text evidence="2">Catalyzes the formation of N(7)-methylguanine at position 46 (m7G46) in tRNA.</text>
</comment>
<comment type="catalytic activity">
    <reaction evidence="2">
        <text>guanosine(46) in tRNA + S-adenosyl-L-methionine = N(7)-methylguanosine(46) in tRNA + S-adenosyl-L-homocysteine</text>
        <dbReference type="Rhea" id="RHEA:42708"/>
        <dbReference type="Rhea" id="RHEA-COMP:10188"/>
        <dbReference type="Rhea" id="RHEA-COMP:10189"/>
        <dbReference type="ChEBI" id="CHEBI:57856"/>
        <dbReference type="ChEBI" id="CHEBI:59789"/>
        <dbReference type="ChEBI" id="CHEBI:74269"/>
        <dbReference type="ChEBI" id="CHEBI:74480"/>
        <dbReference type="EC" id="2.1.1.33"/>
    </reaction>
</comment>
<comment type="pathway">
    <text evidence="2">tRNA modification; N(7)-methylguanine-tRNA biosynthesis.</text>
</comment>
<comment type="similarity">
    <text evidence="2">Belongs to the class I-like SAM-binding methyltransferase superfamily. TrmB family.</text>
</comment>
<keyword id="KW-0489">Methyltransferase</keyword>
<keyword id="KW-0949">S-adenosyl-L-methionine</keyword>
<keyword id="KW-0808">Transferase</keyword>
<keyword id="KW-0819">tRNA processing</keyword>
<accession>Q11BD3</accession>
<organism>
    <name type="scientific">Chelativorans sp. (strain BNC1)</name>
    <dbReference type="NCBI Taxonomy" id="266779"/>
    <lineage>
        <taxon>Bacteria</taxon>
        <taxon>Pseudomonadati</taxon>
        <taxon>Pseudomonadota</taxon>
        <taxon>Alphaproteobacteria</taxon>
        <taxon>Hyphomicrobiales</taxon>
        <taxon>Phyllobacteriaceae</taxon>
        <taxon>Chelativorans</taxon>
    </lineage>
</organism>
<feature type="chain" id="PRO_0000288177" description="tRNA (guanine-N(7)-)-methyltransferase">
    <location>
        <begin position="1"/>
        <end position="232"/>
    </location>
</feature>
<feature type="active site" evidence="1">
    <location>
        <position position="137"/>
    </location>
</feature>
<feature type="binding site" evidence="2">
    <location>
        <position position="63"/>
    </location>
    <ligand>
        <name>S-adenosyl-L-methionine</name>
        <dbReference type="ChEBI" id="CHEBI:59789"/>
    </ligand>
</feature>
<feature type="binding site" evidence="2">
    <location>
        <position position="88"/>
    </location>
    <ligand>
        <name>S-adenosyl-L-methionine</name>
        <dbReference type="ChEBI" id="CHEBI:59789"/>
    </ligand>
</feature>
<feature type="binding site" evidence="2">
    <location>
        <position position="115"/>
    </location>
    <ligand>
        <name>S-adenosyl-L-methionine</name>
        <dbReference type="ChEBI" id="CHEBI:59789"/>
    </ligand>
</feature>
<feature type="binding site" evidence="2">
    <location>
        <position position="137"/>
    </location>
    <ligand>
        <name>S-adenosyl-L-methionine</name>
        <dbReference type="ChEBI" id="CHEBI:59789"/>
    </ligand>
</feature>
<feature type="binding site" evidence="2">
    <location>
        <position position="141"/>
    </location>
    <ligand>
        <name>substrate</name>
    </ligand>
</feature>
<feature type="binding site" evidence="2">
    <location>
        <position position="173"/>
    </location>
    <ligand>
        <name>substrate</name>
    </ligand>
</feature>
<feature type="binding site" evidence="2">
    <location>
        <begin position="211"/>
        <end position="214"/>
    </location>
    <ligand>
        <name>substrate</name>
    </ligand>
</feature>
<reference key="1">
    <citation type="submission" date="2006-06" db="EMBL/GenBank/DDBJ databases">
        <title>Complete sequence of chromosome of Mesorhizobium sp. BNC1.</title>
        <authorList>
            <consortium name="US DOE Joint Genome Institute"/>
            <person name="Copeland A."/>
            <person name="Lucas S."/>
            <person name="Lapidus A."/>
            <person name="Barry K."/>
            <person name="Detter J.C."/>
            <person name="Glavina del Rio T."/>
            <person name="Hammon N."/>
            <person name="Israni S."/>
            <person name="Dalin E."/>
            <person name="Tice H."/>
            <person name="Pitluck S."/>
            <person name="Chertkov O."/>
            <person name="Brettin T."/>
            <person name="Bruce D."/>
            <person name="Han C."/>
            <person name="Tapia R."/>
            <person name="Gilna P."/>
            <person name="Schmutz J."/>
            <person name="Larimer F."/>
            <person name="Land M."/>
            <person name="Hauser L."/>
            <person name="Kyrpides N."/>
            <person name="Mikhailova N."/>
            <person name="Richardson P."/>
        </authorList>
    </citation>
    <scope>NUCLEOTIDE SEQUENCE [LARGE SCALE GENOMIC DNA]</scope>
    <source>
        <strain>BNC1</strain>
    </source>
</reference>
<protein>
    <recommendedName>
        <fullName evidence="2">tRNA (guanine-N(7)-)-methyltransferase</fullName>
        <ecNumber evidence="2">2.1.1.33</ecNumber>
    </recommendedName>
    <alternativeName>
        <fullName evidence="2">tRNA (guanine(46)-N(7))-methyltransferase</fullName>
    </alternativeName>
    <alternativeName>
        <fullName evidence="2">tRNA(m7G46)-methyltransferase</fullName>
    </alternativeName>
</protein>
<evidence type="ECO:0000250" key="1"/>
<evidence type="ECO:0000255" key="2">
    <source>
        <dbReference type="HAMAP-Rule" id="MF_01057"/>
    </source>
</evidence>